<sequence>MIESENLNQEEIIKELCLCNGLSYEMVGQEGSDTSKLEMFFLGYPRIVGLSLFPNLTSLTIVAQDIKEISGLEPCLQLKELWIAECCIEKIEGLQECRNLEKLYLYFNKISKIENLEKLIKLKVLWLNHNTIKNIEGLQTLKNLKDLNLAGNLINSIGRCLDSNEQLERLNLSGNQICSFKELTNLTRLPCLKDLCLNDPQYTTNPVCLLCNYSTHVLYHLPCLQRFDTLDVSAKQIKELADTTAMKKIMYYNMRIKTLQRHLKEDLEKLNDQKCKLQKLPEERVKLFSFVKKTLERELAELKGSGKGHSDGSNNSKVTDPETLKSCETVTEEPSLQQKILAKLNALNERVTFWNKKLDEIEAIYHIEVKQKKKSHGLLIPLLLIELETVGNFHFEEGTRSDDWFNFCYELILSRFCAWDFRTYGITGVKVKRIIKVNNRILRLKFEEKFQKFLENEDMHDSESYRRMLECLFYVFDPEVSVKKKHLLQILEKGFKDSETSKLPLKKEAIIVSNSLSISECPRIEFLQQKHKDEKKISLKHELFRHGILLITKVFLGQSVQAHEKESISQSNYPMVNSVFIPRKYLLNSVMGQRNCDCSVRQCKWFVFDHDLVLPEYVVEFEYITMVKAPSLFSVFNNVILEESKKNPEVSVFSKDLKFDDEVIKMEPRIKARPKLISLDDKTILSLAKTSVYSHIVSLNLHGNSLSKLRDLSKLTGLRKLNISFNEFTCLDDVYHLYNLEYLDASHNHVITLEGFRGLMKLKHLDLSWNQLKKSGNEINMLCKHTTSLLTLDIQHNPWQKPATLRLSVIGRLKTLTHLNGVFISEEEATAAMKFIAGTRITQLSLLRHSSTKEERPRILSIWPSAKILTQVSKLGPHLHLSGNCYLKITALNLDGQHLFEITNLEKLENLKWASFSNNNLTKMEGLESCINLEELTLDGNCISKIEGISKMTKLTRLSINNNLLTGWEEHTFDNMLHLHSLSLENNRITSLSGLQKSFTLVELYISNNYIAVNQEMHNLKGLCNLVILDMCGNIIIWNQENYRLFVIFHLPELKALDGIPIEPSETDSAKDLFGGRLTSDMIAERQGHSNFKQMQELNWTSSSIRTVDLIPVDQFRNVCNVNLQNNHLTSFSGLIYLPNVKVLCLNYNHIESIMPRLKPQTHLTSRQLLYQKVPSSGYGQQGISKTNRDIMSSENLPPIMHSLEVLHLGYNGICNLIQLQLNRLRNLKFLFLQGNEISQVEGLDNLVVLQELVVDHNRIRSFNDSAFAKPSSLLALHLEENRLRELGKLQSLVKLEKLFLGYNKIQDITELEKLDVISTLRELTVYGNPICRKMLHRHMLIFRLPNLQMLDGSPVNSDDRAKAEFHLAELQAKKNSLIPVTHSPMDGRSFGQVKTPPIEITNVLLPSGFSHYLGSDVTLTPEVEEFLGATFQDQIECNCLKRNEHTPRNSPV</sequence>
<proteinExistence type="evidence at protein level"/>
<gene>
    <name type="primary">LRRC9</name>
</gene>
<keyword id="KW-0025">Alternative splicing</keyword>
<keyword id="KW-0433">Leucine-rich repeat</keyword>
<keyword id="KW-1267">Proteomics identification</keyword>
<keyword id="KW-1185">Reference proteome</keyword>
<keyword id="KW-0677">Repeat</keyword>
<organism>
    <name type="scientific">Homo sapiens</name>
    <name type="common">Human</name>
    <dbReference type="NCBI Taxonomy" id="9606"/>
    <lineage>
        <taxon>Eukaryota</taxon>
        <taxon>Metazoa</taxon>
        <taxon>Chordata</taxon>
        <taxon>Craniata</taxon>
        <taxon>Vertebrata</taxon>
        <taxon>Euteleostomi</taxon>
        <taxon>Mammalia</taxon>
        <taxon>Eutheria</taxon>
        <taxon>Euarchontoglires</taxon>
        <taxon>Primates</taxon>
        <taxon>Haplorrhini</taxon>
        <taxon>Catarrhini</taxon>
        <taxon>Hominidae</taxon>
        <taxon>Homo</taxon>
    </lineage>
</organism>
<comment type="alternative products">
    <event type="alternative splicing"/>
    <isoform>
        <id>Q6ZRR7-1</id>
        <name>1</name>
        <sequence type="displayed"/>
    </isoform>
    <isoform>
        <id>Q6ZRR7-2</id>
        <name>2</name>
        <sequence type="described" ref="VSP_033990 VSP_033991"/>
    </isoform>
</comment>
<accession>Q6ZRR7</accession>
<reference key="1">
    <citation type="journal article" date="2004" name="Nat. Genet.">
        <title>Complete sequencing and characterization of 21,243 full-length human cDNAs.</title>
        <authorList>
            <person name="Ota T."/>
            <person name="Suzuki Y."/>
            <person name="Nishikawa T."/>
            <person name="Otsuki T."/>
            <person name="Sugiyama T."/>
            <person name="Irie R."/>
            <person name="Wakamatsu A."/>
            <person name="Hayashi K."/>
            <person name="Sato H."/>
            <person name="Nagai K."/>
            <person name="Kimura K."/>
            <person name="Makita H."/>
            <person name="Sekine M."/>
            <person name="Obayashi M."/>
            <person name="Nishi T."/>
            <person name="Shibahara T."/>
            <person name="Tanaka T."/>
            <person name="Ishii S."/>
            <person name="Yamamoto J."/>
            <person name="Saito K."/>
            <person name="Kawai Y."/>
            <person name="Isono Y."/>
            <person name="Nakamura Y."/>
            <person name="Nagahari K."/>
            <person name="Murakami K."/>
            <person name="Yasuda T."/>
            <person name="Iwayanagi T."/>
            <person name="Wagatsuma M."/>
            <person name="Shiratori A."/>
            <person name="Sudo H."/>
            <person name="Hosoiri T."/>
            <person name="Kaku Y."/>
            <person name="Kodaira H."/>
            <person name="Kondo H."/>
            <person name="Sugawara M."/>
            <person name="Takahashi M."/>
            <person name="Kanda K."/>
            <person name="Yokoi T."/>
            <person name="Furuya T."/>
            <person name="Kikkawa E."/>
            <person name="Omura Y."/>
            <person name="Abe K."/>
            <person name="Kamihara K."/>
            <person name="Katsuta N."/>
            <person name="Sato K."/>
            <person name="Tanikawa M."/>
            <person name="Yamazaki M."/>
            <person name="Ninomiya K."/>
            <person name="Ishibashi T."/>
            <person name="Yamashita H."/>
            <person name="Murakawa K."/>
            <person name="Fujimori K."/>
            <person name="Tanai H."/>
            <person name="Kimata M."/>
            <person name="Watanabe M."/>
            <person name="Hiraoka S."/>
            <person name="Chiba Y."/>
            <person name="Ishida S."/>
            <person name="Ono Y."/>
            <person name="Takiguchi S."/>
            <person name="Watanabe S."/>
            <person name="Yosida M."/>
            <person name="Hotuta T."/>
            <person name="Kusano J."/>
            <person name="Kanehori K."/>
            <person name="Takahashi-Fujii A."/>
            <person name="Hara H."/>
            <person name="Tanase T.-O."/>
            <person name="Nomura Y."/>
            <person name="Togiya S."/>
            <person name="Komai F."/>
            <person name="Hara R."/>
            <person name="Takeuchi K."/>
            <person name="Arita M."/>
            <person name="Imose N."/>
            <person name="Musashino K."/>
            <person name="Yuuki H."/>
            <person name="Oshima A."/>
            <person name="Sasaki N."/>
            <person name="Aotsuka S."/>
            <person name="Yoshikawa Y."/>
            <person name="Matsunawa H."/>
            <person name="Ichihara T."/>
            <person name="Shiohata N."/>
            <person name="Sano S."/>
            <person name="Moriya S."/>
            <person name="Momiyama H."/>
            <person name="Satoh N."/>
            <person name="Takami S."/>
            <person name="Terashima Y."/>
            <person name="Suzuki O."/>
            <person name="Nakagawa S."/>
            <person name="Senoh A."/>
            <person name="Mizoguchi H."/>
            <person name="Goto Y."/>
            <person name="Shimizu F."/>
            <person name="Wakebe H."/>
            <person name="Hishigaki H."/>
            <person name="Watanabe T."/>
            <person name="Sugiyama A."/>
            <person name="Takemoto M."/>
            <person name="Kawakami B."/>
            <person name="Yamazaki M."/>
            <person name="Watanabe K."/>
            <person name="Kumagai A."/>
            <person name="Itakura S."/>
            <person name="Fukuzumi Y."/>
            <person name="Fujimori Y."/>
            <person name="Komiyama M."/>
            <person name="Tashiro H."/>
            <person name="Tanigami A."/>
            <person name="Fujiwara T."/>
            <person name="Ono T."/>
            <person name="Yamada K."/>
            <person name="Fujii Y."/>
            <person name="Ozaki K."/>
            <person name="Hirao M."/>
            <person name="Ohmori Y."/>
            <person name="Kawabata A."/>
            <person name="Hikiji T."/>
            <person name="Kobatake N."/>
            <person name="Inagaki H."/>
            <person name="Ikema Y."/>
            <person name="Okamoto S."/>
            <person name="Okitani R."/>
            <person name="Kawakami T."/>
            <person name="Noguchi S."/>
            <person name="Itoh T."/>
            <person name="Shigeta K."/>
            <person name="Senba T."/>
            <person name="Matsumura K."/>
            <person name="Nakajima Y."/>
            <person name="Mizuno T."/>
            <person name="Morinaga M."/>
            <person name="Sasaki M."/>
            <person name="Togashi T."/>
            <person name="Oyama M."/>
            <person name="Hata H."/>
            <person name="Watanabe M."/>
            <person name="Komatsu T."/>
            <person name="Mizushima-Sugano J."/>
            <person name="Satoh T."/>
            <person name="Shirai Y."/>
            <person name="Takahashi Y."/>
            <person name="Nakagawa K."/>
            <person name="Okumura K."/>
            <person name="Nagase T."/>
            <person name="Nomura N."/>
            <person name="Kikuchi H."/>
            <person name="Masuho Y."/>
            <person name="Yamashita R."/>
            <person name="Nakai K."/>
            <person name="Yada T."/>
            <person name="Nakamura Y."/>
            <person name="Ohara O."/>
            <person name="Isogai T."/>
            <person name="Sugano S."/>
        </authorList>
    </citation>
    <scope>NUCLEOTIDE SEQUENCE [LARGE SCALE MRNA] (ISOFORM 2)</scope>
    <source>
        <tissue>Testis</tissue>
    </source>
</reference>
<reference key="2">
    <citation type="journal article" date="2003" name="Nature">
        <title>The DNA sequence and analysis of human chromosome 14.</title>
        <authorList>
            <person name="Heilig R."/>
            <person name="Eckenberg R."/>
            <person name="Petit J.-L."/>
            <person name="Fonknechten N."/>
            <person name="Da Silva C."/>
            <person name="Cattolico L."/>
            <person name="Levy M."/>
            <person name="Barbe V."/>
            <person name="De Berardinis V."/>
            <person name="Ureta-Vidal A."/>
            <person name="Pelletier E."/>
            <person name="Vico V."/>
            <person name="Anthouard V."/>
            <person name="Rowen L."/>
            <person name="Madan A."/>
            <person name="Qin S."/>
            <person name="Sun H."/>
            <person name="Du H."/>
            <person name="Pepin K."/>
            <person name="Artiguenave F."/>
            <person name="Robert C."/>
            <person name="Cruaud C."/>
            <person name="Bruels T."/>
            <person name="Jaillon O."/>
            <person name="Friedlander L."/>
            <person name="Samson G."/>
            <person name="Brottier P."/>
            <person name="Cure S."/>
            <person name="Segurens B."/>
            <person name="Aniere F."/>
            <person name="Samain S."/>
            <person name="Crespeau H."/>
            <person name="Abbasi N."/>
            <person name="Aiach N."/>
            <person name="Boscus D."/>
            <person name="Dickhoff R."/>
            <person name="Dors M."/>
            <person name="Dubois I."/>
            <person name="Friedman C."/>
            <person name="Gouyvenoux M."/>
            <person name="James R."/>
            <person name="Madan A."/>
            <person name="Mairey-Estrada B."/>
            <person name="Mangenot S."/>
            <person name="Martins N."/>
            <person name="Menard M."/>
            <person name="Oztas S."/>
            <person name="Ratcliffe A."/>
            <person name="Shaffer T."/>
            <person name="Trask B."/>
            <person name="Vacherie B."/>
            <person name="Bellemere C."/>
            <person name="Belser C."/>
            <person name="Besnard-Gonnet M."/>
            <person name="Bartol-Mavel D."/>
            <person name="Boutard M."/>
            <person name="Briez-Silla S."/>
            <person name="Combette S."/>
            <person name="Dufosse-Laurent V."/>
            <person name="Ferron C."/>
            <person name="Lechaplais C."/>
            <person name="Louesse C."/>
            <person name="Muselet D."/>
            <person name="Magdelenat G."/>
            <person name="Pateau E."/>
            <person name="Petit E."/>
            <person name="Sirvain-Trukniewicz P."/>
            <person name="Trybou A."/>
            <person name="Vega-Czarny N."/>
            <person name="Bataille E."/>
            <person name="Bluet E."/>
            <person name="Bordelais I."/>
            <person name="Dubois M."/>
            <person name="Dumont C."/>
            <person name="Guerin T."/>
            <person name="Haffray S."/>
            <person name="Hammadi R."/>
            <person name="Muanga J."/>
            <person name="Pellouin V."/>
            <person name="Robert D."/>
            <person name="Wunderle E."/>
            <person name="Gauguet G."/>
            <person name="Roy A."/>
            <person name="Sainte-Marthe L."/>
            <person name="Verdier J."/>
            <person name="Verdier-Discala C."/>
            <person name="Hillier L.W."/>
            <person name="Fulton L."/>
            <person name="McPherson J."/>
            <person name="Matsuda F."/>
            <person name="Wilson R."/>
            <person name="Scarpelli C."/>
            <person name="Gyapay G."/>
            <person name="Wincker P."/>
            <person name="Saurin W."/>
            <person name="Quetier F."/>
            <person name="Waterston R."/>
            <person name="Hood L."/>
            <person name="Weissenbach J."/>
        </authorList>
    </citation>
    <scope>NUCLEOTIDE SEQUENCE [LARGE SCALE GENOMIC DNA]</scope>
</reference>
<feature type="chain" id="PRO_0000337676" description="Leucine-rich repeat-containing protein 9">
    <location>
        <begin position="1"/>
        <end position="1453"/>
    </location>
</feature>
<feature type="repeat" description="LRR 1">
    <location>
        <begin position="53"/>
        <end position="78"/>
    </location>
</feature>
<feature type="repeat" description="LRR 2">
    <location>
        <begin position="97"/>
        <end position="119"/>
    </location>
</feature>
<feature type="repeat" description="LRR 3">
    <location>
        <begin position="120"/>
        <end position="141"/>
    </location>
</feature>
<feature type="repeat" description="LRR 4">
    <location>
        <begin position="142"/>
        <end position="164"/>
    </location>
</feature>
<feature type="repeat" description="LRR 5">
    <location>
        <begin position="166"/>
        <end position="188"/>
    </location>
</feature>
<feature type="repeat" description="LRR 6">
    <location>
        <begin position="224"/>
        <end position="248"/>
    </location>
</feature>
<feature type="repeat" description="LRR 7">
    <location>
        <begin position="264"/>
        <end position="287"/>
    </location>
</feature>
<feature type="repeat" description="LRR 8">
    <location>
        <begin position="344"/>
        <end position="367"/>
    </location>
</feature>
<feature type="repeat" description="LRR 9">
    <location>
        <begin position="671"/>
        <end position="693"/>
    </location>
</feature>
<feature type="repeat" description="LRR 10">
    <location>
        <begin position="694"/>
        <end position="715"/>
    </location>
</feature>
<feature type="repeat" description="LRR 11">
    <location>
        <begin position="716"/>
        <end position="737"/>
    </location>
</feature>
<feature type="repeat" description="LRR 12">
    <location>
        <begin position="739"/>
        <end position="758"/>
    </location>
</feature>
<feature type="repeat" description="LRR 13">
    <location>
        <begin position="759"/>
        <end position="784"/>
    </location>
</feature>
<feature type="repeat" description="LRR 14">
    <location>
        <begin position="786"/>
        <end position="812"/>
    </location>
</feature>
<feature type="repeat" description="LRR 15">
    <location>
        <begin position="886"/>
        <end position="908"/>
    </location>
</feature>
<feature type="repeat" description="LRR 16">
    <location>
        <begin position="909"/>
        <end position="930"/>
    </location>
</feature>
<feature type="repeat" description="LRR 17">
    <location>
        <begin position="931"/>
        <end position="952"/>
    </location>
</feature>
<feature type="repeat" description="LRR 18">
    <location>
        <begin position="953"/>
        <end position="975"/>
    </location>
</feature>
<feature type="repeat" description="LRR 19">
    <location>
        <begin position="976"/>
        <end position="1001"/>
    </location>
</feature>
<feature type="repeat" description="LRR 20">
    <location>
        <begin position="1023"/>
        <end position="1048"/>
    </location>
</feature>
<feature type="repeat" description="LRR 21">
    <location>
        <begin position="1092"/>
        <end position="1115"/>
    </location>
</feature>
<feature type="repeat" description="LRR 22">
    <location>
        <begin position="1116"/>
        <end position="1138"/>
    </location>
</feature>
<feature type="repeat" description="LRR 23">
    <location>
        <begin position="1139"/>
        <end position="1161"/>
    </location>
</feature>
<feature type="repeat" description="LRR 24">
    <location>
        <begin position="1201"/>
        <end position="1224"/>
    </location>
</feature>
<feature type="repeat" description="LRR 25">
    <location>
        <begin position="1225"/>
        <end position="1247"/>
    </location>
</feature>
<feature type="repeat" description="LRR 26">
    <location>
        <begin position="1248"/>
        <end position="1270"/>
    </location>
</feature>
<feature type="repeat" description="LRR 27">
    <location>
        <begin position="1272"/>
        <end position="1292"/>
    </location>
</feature>
<feature type="repeat" description="LRR 28">
    <location>
        <begin position="1293"/>
        <end position="1317"/>
    </location>
</feature>
<feature type="repeat" description="LRR 29">
    <location>
        <begin position="1319"/>
        <end position="1345"/>
    </location>
</feature>
<feature type="repeat" description="LRR 30">
    <location>
        <begin position="1365"/>
        <end position="1388"/>
    </location>
</feature>
<feature type="region of interest" description="Disordered" evidence="1">
    <location>
        <begin position="302"/>
        <end position="321"/>
    </location>
</feature>
<feature type="splice variant" id="VSP_033990" description="In isoform 2." evidence="2">
    <original>RTVDLI</original>
    <variation>SCIYFV</variation>
    <location>
        <begin position="1106"/>
        <end position="1111"/>
    </location>
</feature>
<feature type="splice variant" id="VSP_033991" description="In isoform 2." evidence="2">
    <location>
        <begin position="1112"/>
        <end position="1453"/>
    </location>
</feature>
<feature type="sequence conflict" description="In Ref. 1; BAC87242." evidence="3" ref="1">
    <original>C</original>
    <variation>R</variation>
    <location>
        <position position="87"/>
    </location>
</feature>
<feature type="sequence conflict" description="In Ref. 1; BAC87242." evidence="3" ref="1">
    <original>A</original>
    <variation>P</variation>
    <location>
        <position position="629"/>
    </location>
</feature>
<name>LRRC9_HUMAN</name>
<protein>
    <recommendedName>
        <fullName>Leucine-rich repeat-containing protein 9</fullName>
    </recommendedName>
</protein>
<dbReference type="EMBL" id="AK128037">
    <property type="protein sequence ID" value="BAC87242.1"/>
    <property type="molecule type" value="mRNA"/>
</dbReference>
<dbReference type="EMBL" id="AL133299">
    <property type="status" value="NOT_ANNOTATED_CDS"/>
    <property type="molecule type" value="Genomic_DNA"/>
</dbReference>
<dbReference type="EMBL" id="AL157911">
    <property type="status" value="NOT_ANNOTATED_CDS"/>
    <property type="molecule type" value="Genomic_DNA"/>
</dbReference>
<dbReference type="SMR" id="Q6ZRR7"/>
<dbReference type="FunCoup" id="Q6ZRR7">
    <property type="interactions" value="504"/>
</dbReference>
<dbReference type="IntAct" id="Q6ZRR7">
    <property type="interactions" value="1"/>
</dbReference>
<dbReference type="STRING" id="9606.ENSP00000493790"/>
<dbReference type="iPTMnet" id="Q6ZRR7"/>
<dbReference type="PhosphoSitePlus" id="Q6ZRR7"/>
<dbReference type="BioMuta" id="LRRC9"/>
<dbReference type="DMDM" id="189028874"/>
<dbReference type="jPOST" id="Q6ZRR7"/>
<dbReference type="MassIVE" id="Q6ZRR7"/>
<dbReference type="PaxDb" id="9606-ENSP00000454748"/>
<dbReference type="PeptideAtlas" id="Q6ZRR7"/>
<dbReference type="Antibodypedia" id="72204">
    <property type="antibodies" value="9 antibodies from 4 providers"/>
</dbReference>
<dbReference type="Ensembl" id="ENST00000254271.8">
    <molecule id="Q6ZRR7-2"/>
    <property type="protein sequence ID" value="ENSP00000454848.1"/>
    <property type="gene ID" value="ENSG00000131951.12"/>
</dbReference>
<dbReference type="Ensembl" id="ENST00000445360.5">
    <molecule id="Q6ZRR7-1"/>
    <property type="protein sequence ID" value="ENSP00000454748.1"/>
    <property type="gene ID" value="ENSG00000131951.12"/>
</dbReference>
<dbReference type="UCSC" id="uc001xep.2">
    <molecule id="Q6ZRR7-1"/>
    <property type="organism name" value="human"/>
</dbReference>
<dbReference type="AGR" id="HGNC:19848"/>
<dbReference type="GeneCards" id="LRRC9"/>
<dbReference type="HGNC" id="HGNC:19848">
    <property type="gene designation" value="LRRC9"/>
</dbReference>
<dbReference type="HPA" id="ENSG00000131951">
    <property type="expression patterns" value="Group enriched (choroid plexus, testis)"/>
</dbReference>
<dbReference type="neXtProt" id="NX_Q6ZRR7"/>
<dbReference type="OpenTargets" id="ENSG00000131951"/>
<dbReference type="VEuPathDB" id="HostDB:ENSG00000131951"/>
<dbReference type="eggNOG" id="KOG0531">
    <property type="taxonomic scope" value="Eukaryota"/>
</dbReference>
<dbReference type="GeneTree" id="ENSGT00940000158583"/>
<dbReference type="HOGENOM" id="CLU_002627_0_0_1"/>
<dbReference type="InParanoid" id="Q6ZRR7"/>
<dbReference type="OrthoDB" id="1517790at2759"/>
<dbReference type="PAN-GO" id="Q6ZRR7">
    <property type="GO annotations" value="0 GO annotations based on evolutionary models"/>
</dbReference>
<dbReference type="PhylomeDB" id="Q6ZRR7"/>
<dbReference type="TreeFam" id="TF329042"/>
<dbReference type="PathwayCommons" id="Q6ZRR7"/>
<dbReference type="SignaLink" id="Q6ZRR7"/>
<dbReference type="ChiTaRS" id="LRRC9">
    <property type="organism name" value="human"/>
</dbReference>
<dbReference type="Pharos" id="Q6ZRR7">
    <property type="development level" value="Tdark"/>
</dbReference>
<dbReference type="PRO" id="PR:Q6ZRR7"/>
<dbReference type="Proteomes" id="UP000005640">
    <property type="component" value="Chromosome 14"/>
</dbReference>
<dbReference type="RNAct" id="Q6ZRR7">
    <property type="molecule type" value="protein"/>
</dbReference>
<dbReference type="Bgee" id="ENSG00000131951">
    <property type="expression patterns" value="Expressed in primordial germ cell in gonad and 80 other cell types or tissues"/>
</dbReference>
<dbReference type="ExpressionAtlas" id="Q6ZRR7">
    <property type="expression patterns" value="baseline and differential"/>
</dbReference>
<dbReference type="GO" id="GO:0005737">
    <property type="term" value="C:cytoplasm"/>
    <property type="evidence" value="ECO:0000314"/>
    <property type="project" value="UniProtKB"/>
</dbReference>
<dbReference type="Gene3D" id="3.80.10.10">
    <property type="entry name" value="Ribonuclease Inhibitor"/>
    <property type="match status" value="8"/>
</dbReference>
<dbReference type="InterPro" id="IPR001611">
    <property type="entry name" value="Leu-rich_rpt"/>
</dbReference>
<dbReference type="InterPro" id="IPR025875">
    <property type="entry name" value="Leu-rich_rpt_4"/>
</dbReference>
<dbReference type="InterPro" id="IPR003591">
    <property type="entry name" value="Leu-rich_rpt_typical-subtyp"/>
</dbReference>
<dbReference type="InterPro" id="IPR032675">
    <property type="entry name" value="LRR_dom_sf"/>
</dbReference>
<dbReference type="InterPro" id="IPR050836">
    <property type="entry name" value="SDS22/Internalin_LRR"/>
</dbReference>
<dbReference type="PANTHER" id="PTHR46652">
    <property type="entry name" value="LEUCINE-RICH REPEAT AND IQ DOMAIN-CONTAINING PROTEIN 1-RELATED"/>
    <property type="match status" value="1"/>
</dbReference>
<dbReference type="PANTHER" id="PTHR46652:SF3">
    <property type="entry name" value="LEUCINE-RICH REPEAT-CONTAINING PROTEIN 9"/>
    <property type="match status" value="1"/>
</dbReference>
<dbReference type="Pfam" id="PF12799">
    <property type="entry name" value="LRR_4"/>
    <property type="match status" value="2"/>
</dbReference>
<dbReference type="Pfam" id="PF13855">
    <property type="entry name" value="LRR_8"/>
    <property type="match status" value="1"/>
</dbReference>
<dbReference type="Pfam" id="PF14580">
    <property type="entry name" value="LRR_9"/>
    <property type="match status" value="1"/>
</dbReference>
<dbReference type="SMART" id="SM00364">
    <property type="entry name" value="LRR_BAC"/>
    <property type="match status" value="6"/>
</dbReference>
<dbReference type="SMART" id="SM00365">
    <property type="entry name" value="LRR_SD22"/>
    <property type="match status" value="15"/>
</dbReference>
<dbReference type="SMART" id="SM00369">
    <property type="entry name" value="LRR_TYP"/>
    <property type="match status" value="11"/>
</dbReference>
<dbReference type="SUPFAM" id="SSF52058">
    <property type="entry name" value="L domain-like"/>
    <property type="match status" value="2"/>
</dbReference>
<dbReference type="SUPFAM" id="SSF52075">
    <property type="entry name" value="Outer arm dynein light chain 1"/>
    <property type="match status" value="1"/>
</dbReference>
<dbReference type="PROSITE" id="PS51450">
    <property type="entry name" value="LRR"/>
    <property type="match status" value="24"/>
</dbReference>
<evidence type="ECO:0000256" key="1">
    <source>
        <dbReference type="SAM" id="MobiDB-lite"/>
    </source>
</evidence>
<evidence type="ECO:0000303" key="2">
    <source>
    </source>
</evidence>
<evidence type="ECO:0000305" key="3"/>